<gene>
    <name type="ordered locus">Bcen_0802</name>
</gene>
<comment type="subcellular location">
    <subcellularLocation>
        <location evidence="1">Cell inner membrane</location>
        <topology evidence="1">Multi-pass membrane protein</topology>
    </subcellularLocation>
</comment>
<comment type="similarity">
    <text evidence="1">Belongs to the UPF0060 family.</text>
</comment>
<dbReference type="EMBL" id="CP000378">
    <property type="protein sequence ID" value="ABF75712.1"/>
    <property type="molecule type" value="Genomic_DNA"/>
</dbReference>
<dbReference type="SMR" id="Q1BXE3"/>
<dbReference type="HOGENOM" id="CLU_117653_2_0_4"/>
<dbReference type="GO" id="GO:0005886">
    <property type="term" value="C:plasma membrane"/>
    <property type="evidence" value="ECO:0007669"/>
    <property type="project" value="UniProtKB-SubCell"/>
</dbReference>
<dbReference type="HAMAP" id="MF_00010">
    <property type="entry name" value="UPF0060"/>
    <property type="match status" value="1"/>
</dbReference>
<dbReference type="InterPro" id="IPR003844">
    <property type="entry name" value="UPF0060"/>
</dbReference>
<dbReference type="NCBIfam" id="NF002586">
    <property type="entry name" value="PRK02237.1"/>
    <property type="match status" value="1"/>
</dbReference>
<dbReference type="PANTHER" id="PTHR36116">
    <property type="entry name" value="UPF0060 MEMBRANE PROTEIN YNFA"/>
    <property type="match status" value="1"/>
</dbReference>
<dbReference type="PANTHER" id="PTHR36116:SF1">
    <property type="entry name" value="UPF0060 MEMBRANE PROTEIN YNFA"/>
    <property type="match status" value="1"/>
</dbReference>
<dbReference type="Pfam" id="PF02694">
    <property type="entry name" value="UPF0060"/>
    <property type="match status" value="1"/>
</dbReference>
<dbReference type="SUPFAM" id="SSF103481">
    <property type="entry name" value="Multidrug resistance efflux transporter EmrE"/>
    <property type="match status" value="1"/>
</dbReference>
<protein>
    <recommendedName>
        <fullName evidence="1">UPF0060 membrane protein Bcen_0802</fullName>
    </recommendedName>
</protein>
<sequence>MTELMRIAALFAATALAEIVGCYLPWLVLKAGRPAWLLVPAALSLALFAWLLTLHPSAAGRTYAAYGGVYIAVALIWLRVVDGVALTRWDVAGAVLALGGMAVIALQPRA</sequence>
<accession>Q1BXE3</accession>
<reference key="1">
    <citation type="submission" date="2006-05" db="EMBL/GenBank/DDBJ databases">
        <title>Complete sequence of chromosome 1 of Burkholderia cenocepacia AU 1054.</title>
        <authorList>
            <consortium name="US DOE Joint Genome Institute"/>
            <person name="Copeland A."/>
            <person name="Lucas S."/>
            <person name="Lapidus A."/>
            <person name="Barry K."/>
            <person name="Detter J.C."/>
            <person name="Glavina del Rio T."/>
            <person name="Hammon N."/>
            <person name="Israni S."/>
            <person name="Dalin E."/>
            <person name="Tice H."/>
            <person name="Pitluck S."/>
            <person name="Chain P."/>
            <person name="Malfatti S."/>
            <person name="Shin M."/>
            <person name="Vergez L."/>
            <person name="Schmutz J."/>
            <person name="Larimer F."/>
            <person name="Land M."/>
            <person name="Hauser L."/>
            <person name="Kyrpides N."/>
            <person name="Lykidis A."/>
            <person name="LiPuma J.J."/>
            <person name="Konstantinidis K."/>
            <person name="Tiedje J.M."/>
            <person name="Richardson P."/>
        </authorList>
    </citation>
    <scope>NUCLEOTIDE SEQUENCE [LARGE SCALE GENOMIC DNA]</scope>
    <source>
        <strain>AU 1054</strain>
    </source>
</reference>
<keyword id="KW-0997">Cell inner membrane</keyword>
<keyword id="KW-1003">Cell membrane</keyword>
<keyword id="KW-0472">Membrane</keyword>
<keyword id="KW-0812">Transmembrane</keyword>
<keyword id="KW-1133">Transmembrane helix</keyword>
<feature type="chain" id="PRO_0000282207" description="UPF0060 membrane protein Bcen_0802">
    <location>
        <begin position="1"/>
        <end position="110"/>
    </location>
</feature>
<feature type="transmembrane region" description="Helical" evidence="1">
    <location>
        <begin position="9"/>
        <end position="29"/>
    </location>
</feature>
<feature type="transmembrane region" description="Helical" evidence="1">
    <location>
        <begin position="34"/>
        <end position="54"/>
    </location>
</feature>
<feature type="transmembrane region" description="Helical" evidence="1">
    <location>
        <begin position="66"/>
        <end position="86"/>
    </location>
</feature>
<feature type="transmembrane region" description="Helical" evidence="1">
    <location>
        <begin position="88"/>
        <end position="108"/>
    </location>
</feature>
<organism>
    <name type="scientific">Burkholderia orbicola (strain AU 1054)</name>
    <dbReference type="NCBI Taxonomy" id="331271"/>
    <lineage>
        <taxon>Bacteria</taxon>
        <taxon>Pseudomonadati</taxon>
        <taxon>Pseudomonadota</taxon>
        <taxon>Betaproteobacteria</taxon>
        <taxon>Burkholderiales</taxon>
        <taxon>Burkholderiaceae</taxon>
        <taxon>Burkholderia</taxon>
        <taxon>Burkholderia cepacia complex</taxon>
        <taxon>Burkholderia orbicola</taxon>
    </lineage>
</organism>
<name>Y802_BURO1</name>
<proteinExistence type="inferred from homology"/>
<evidence type="ECO:0000255" key="1">
    <source>
        <dbReference type="HAMAP-Rule" id="MF_00010"/>
    </source>
</evidence>